<dbReference type="EMBL" id="CP000942">
    <property type="protein sequence ID" value="ACA33014.1"/>
    <property type="molecule type" value="Genomic_DNA"/>
</dbReference>
<dbReference type="RefSeq" id="WP_006688897.1">
    <property type="nucleotide sequence ID" value="NC_010503.1"/>
</dbReference>
<dbReference type="SMR" id="B1AIB7"/>
<dbReference type="GeneID" id="29672196"/>
<dbReference type="KEGG" id="upa:UPA3_0134"/>
<dbReference type="HOGENOM" id="CLU_1874552_0_0_14"/>
<dbReference type="Proteomes" id="UP000002162">
    <property type="component" value="Chromosome"/>
</dbReference>
<dbReference type="GO" id="GO:0005886">
    <property type="term" value="C:plasma membrane"/>
    <property type="evidence" value="ECO:0007669"/>
    <property type="project" value="UniProtKB-SubCell"/>
</dbReference>
<dbReference type="GO" id="GO:0045259">
    <property type="term" value="C:proton-transporting ATP synthase complex"/>
    <property type="evidence" value="ECO:0007669"/>
    <property type="project" value="UniProtKB-KW"/>
</dbReference>
<dbReference type="GO" id="GO:0005524">
    <property type="term" value="F:ATP binding"/>
    <property type="evidence" value="ECO:0007669"/>
    <property type="project" value="UniProtKB-UniRule"/>
</dbReference>
<dbReference type="GO" id="GO:0046933">
    <property type="term" value="F:proton-transporting ATP synthase activity, rotational mechanism"/>
    <property type="evidence" value="ECO:0007669"/>
    <property type="project" value="UniProtKB-UniRule"/>
</dbReference>
<dbReference type="CDD" id="cd12152">
    <property type="entry name" value="F1-ATPase_delta"/>
    <property type="match status" value="1"/>
</dbReference>
<dbReference type="Gene3D" id="2.60.15.10">
    <property type="entry name" value="F0F1 ATP synthase delta/epsilon subunit, N-terminal"/>
    <property type="match status" value="1"/>
</dbReference>
<dbReference type="HAMAP" id="MF_00530">
    <property type="entry name" value="ATP_synth_epsil_bac"/>
    <property type="match status" value="1"/>
</dbReference>
<dbReference type="InterPro" id="IPR001469">
    <property type="entry name" value="ATP_synth_F1_dsu/esu"/>
</dbReference>
<dbReference type="InterPro" id="IPR020546">
    <property type="entry name" value="ATP_synth_F1_dsu/esu_N"/>
</dbReference>
<dbReference type="InterPro" id="IPR036771">
    <property type="entry name" value="ATPsynth_dsu/esu_N"/>
</dbReference>
<dbReference type="NCBIfam" id="TIGR01216">
    <property type="entry name" value="ATP_synt_epsi"/>
    <property type="match status" value="1"/>
</dbReference>
<dbReference type="Pfam" id="PF02823">
    <property type="entry name" value="ATP-synt_DE_N"/>
    <property type="match status" value="1"/>
</dbReference>
<dbReference type="SUPFAM" id="SSF51344">
    <property type="entry name" value="Epsilon subunit of F1F0-ATP synthase N-terminal domain"/>
    <property type="match status" value="1"/>
</dbReference>
<comment type="function">
    <text evidence="1">Produces ATP from ADP in the presence of a proton gradient across the membrane.</text>
</comment>
<comment type="subunit">
    <text evidence="1">F-type ATPases have 2 components, CF(1) - the catalytic core - and CF(0) - the membrane proton channel. CF(1) has five subunits: alpha(3), beta(3), gamma(1), delta(1), epsilon(1). CF(0) has three main subunits: a, b and c.</text>
</comment>
<comment type="subcellular location">
    <subcellularLocation>
        <location evidence="1">Cell membrane</location>
        <topology evidence="1">Peripheral membrane protein</topology>
    </subcellularLocation>
</comment>
<comment type="similarity">
    <text evidence="1">Belongs to the ATPase epsilon chain family.</text>
</comment>
<feature type="chain" id="PRO_1000081754" description="ATP synthase epsilon chain">
    <location>
        <begin position="1"/>
        <end position="136"/>
    </location>
</feature>
<accession>B1AIB7</accession>
<proteinExistence type="inferred from homology"/>
<keyword id="KW-0066">ATP synthesis</keyword>
<keyword id="KW-1003">Cell membrane</keyword>
<keyword id="KW-0139">CF(1)</keyword>
<keyword id="KW-0375">Hydrogen ion transport</keyword>
<keyword id="KW-0406">Ion transport</keyword>
<keyword id="KW-0472">Membrane</keyword>
<keyword id="KW-0813">Transport</keyword>
<reference key="1">
    <citation type="submission" date="2008-02" db="EMBL/GenBank/DDBJ databases">
        <title>Genome sequence of Ureaplasma parvum serovar 3.</title>
        <authorList>
            <person name="Methe B.A."/>
            <person name="Glass J."/>
            <person name="Waites K."/>
            <person name="Shrivastava S."/>
        </authorList>
    </citation>
    <scope>NUCLEOTIDE SEQUENCE [LARGE SCALE GENOMIC DNA]</scope>
    <source>
        <strain>ATCC 27815 / 27 / NCTC 11736</strain>
    </source>
</reference>
<organism>
    <name type="scientific">Ureaplasma parvum serovar 3 (strain ATCC 27815 / 27 / NCTC 11736)</name>
    <dbReference type="NCBI Taxonomy" id="505682"/>
    <lineage>
        <taxon>Bacteria</taxon>
        <taxon>Bacillati</taxon>
        <taxon>Mycoplasmatota</taxon>
        <taxon>Mycoplasmoidales</taxon>
        <taxon>Mycoplasmoidaceae</taxon>
        <taxon>Ureaplasma</taxon>
    </lineage>
</organism>
<evidence type="ECO:0000255" key="1">
    <source>
        <dbReference type="HAMAP-Rule" id="MF_00530"/>
    </source>
</evidence>
<name>ATPE_UREP2</name>
<sequence>MANLTKLKIVTPYAQILEKDVYSVELKTSEGRITVLPDHNPLMSTIENHVAYIRELPNTPRKPLLLLDGIVYIEQHQVRVFSDYFKFLDEIQIDEINSSLNQLKHDLNNEEDDKKKLQLKSKIKLNESILIAYKDR</sequence>
<protein>
    <recommendedName>
        <fullName evidence="1">ATP synthase epsilon chain</fullName>
    </recommendedName>
    <alternativeName>
        <fullName evidence="1">ATP synthase F1 sector epsilon subunit</fullName>
    </alternativeName>
    <alternativeName>
        <fullName evidence="1">F-ATPase epsilon subunit</fullName>
    </alternativeName>
</protein>
<gene>
    <name evidence="1" type="primary">atpC</name>
    <name type="ordered locus">UPA3_0134</name>
</gene>